<comment type="function">
    <text evidence="1">IGPS catalyzes the conversion of PRFAR and glutamine to IGP, AICAR and glutamate. The HisH subunit catalyzes the hydrolysis of glutamine to glutamate and ammonia as part of the synthesis of IGP and AICAR. The resulting ammonia molecule is channeled to the active site of HisF.</text>
</comment>
<comment type="catalytic activity">
    <reaction evidence="1">
        <text>5-[(5-phospho-1-deoxy-D-ribulos-1-ylimino)methylamino]-1-(5-phospho-beta-D-ribosyl)imidazole-4-carboxamide + L-glutamine = D-erythro-1-(imidazol-4-yl)glycerol 3-phosphate + 5-amino-1-(5-phospho-beta-D-ribosyl)imidazole-4-carboxamide + L-glutamate + H(+)</text>
        <dbReference type="Rhea" id="RHEA:24793"/>
        <dbReference type="ChEBI" id="CHEBI:15378"/>
        <dbReference type="ChEBI" id="CHEBI:29985"/>
        <dbReference type="ChEBI" id="CHEBI:58278"/>
        <dbReference type="ChEBI" id="CHEBI:58359"/>
        <dbReference type="ChEBI" id="CHEBI:58475"/>
        <dbReference type="ChEBI" id="CHEBI:58525"/>
        <dbReference type="EC" id="4.3.2.10"/>
    </reaction>
</comment>
<comment type="catalytic activity">
    <reaction evidence="1">
        <text>L-glutamine + H2O = L-glutamate + NH4(+)</text>
        <dbReference type="Rhea" id="RHEA:15889"/>
        <dbReference type="ChEBI" id="CHEBI:15377"/>
        <dbReference type="ChEBI" id="CHEBI:28938"/>
        <dbReference type="ChEBI" id="CHEBI:29985"/>
        <dbReference type="ChEBI" id="CHEBI:58359"/>
        <dbReference type="EC" id="3.5.1.2"/>
    </reaction>
</comment>
<comment type="pathway">
    <text evidence="1">Amino-acid biosynthesis; L-histidine biosynthesis; L-histidine from 5-phospho-alpha-D-ribose 1-diphosphate: step 5/9.</text>
</comment>
<comment type="subunit">
    <text evidence="1">Heterodimer of HisH and HisF.</text>
</comment>
<comment type="subcellular location">
    <subcellularLocation>
        <location evidence="1">Cytoplasm</location>
    </subcellularLocation>
</comment>
<keyword id="KW-0028">Amino-acid biosynthesis</keyword>
<keyword id="KW-0963">Cytoplasm</keyword>
<keyword id="KW-0315">Glutamine amidotransferase</keyword>
<keyword id="KW-0368">Histidine biosynthesis</keyword>
<keyword id="KW-0378">Hydrolase</keyword>
<keyword id="KW-0456">Lyase</keyword>
<keyword id="KW-1185">Reference proteome</keyword>
<name>HIS5_SALRD</name>
<accession>Q2S299</accession>
<reference key="1">
    <citation type="journal article" date="2005" name="Proc. Natl. Acad. Sci. U.S.A.">
        <title>The genome of Salinibacter ruber: convergence and gene exchange among hyperhalophilic bacteria and archaea.</title>
        <authorList>
            <person name="Mongodin E.F."/>
            <person name="Nelson K.E."/>
            <person name="Daugherty S."/>
            <person name="DeBoy R.T."/>
            <person name="Wister J."/>
            <person name="Khouri H."/>
            <person name="Weidman J."/>
            <person name="Walsh D.A."/>
            <person name="Papke R.T."/>
            <person name="Sanchez Perez G."/>
            <person name="Sharma A.K."/>
            <person name="Nesbo C.L."/>
            <person name="MacLeod D."/>
            <person name="Bapteste E."/>
            <person name="Doolittle W.F."/>
            <person name="Charlebois R.L."/>
            <person name="Legault B."/>
            <person name="Rodriguez-Valera F."/>
        </authorList>
    </citation>
    <scope>NUCLEOTIDE SEQUENCE [LARGE SCALE GENOMIC DNA]</scope>
    <source>
        <strain>DSM 13855 / CECT 5946 / M31</strain>
    </source>
</reference>
<proteinExistence type="inferred from homology"/>
<organism>
    <name type="scientific">Salinibacter ruber (strain DSM 13855 / M31)</name>
    <dbReference type="NCBI Taxonomy" id="309807"/>
    <lineage>
        <taxon>Bacteria</taxon>
        <taxon>Pseudomonadati</taxon>
        <taxon>Rhodothermota</taxon>
        <taxon>Rhodothermia</taxon>
        <taxon>Rhodothermales</taxon>
        <taxon>Salinibacteraceae</taxon>
        <taxon>Salinibacter</taxon>
    </lineage>
</organism>
<protein>
    <recommendedName>
        <fullName evidence="1">Imidazole glycerol phosphate synthase subunit HisH</fullName>
        <ecNumber evidence="1">4.3.2.10</ecNumber>
    </recommendedName>
    <alternativeName>
        <fullName evidence="1">IGP synthase glutaminase subunit</fullName>
        <ecNumber evidence="1">3.5.1.2</ecNumber>
    </alternativeName>
    <alternativeName>
        <fullName evidence="1">IGP synthase subunit HisH</fullName>
    </alternativeName>
    <alternativeName>
        <fullName evidence="1">ImGP synthase subunit HisH</fullName>
        <shortName evidence="1">IGPS subunit HisH</shortName>
    </alternativeName>
</protein>
<sequence length="218" mass="23661">MTTIIDYGIGNLRSIEKAFETVGATVHRTDDPAAIAEAERLVLPGVGAFRACIDEIRRRDLEGPIHDAIGRGVPFLGVCVGMQLLFETGYEKGEHEGLGVLPGHVAHFRETDAGMPDELTVPHMGWNAIEPTRDHPLLDELGATPYVYFVHSYHPVAEDADDVLTTTSYGHTFPSVVQRDNVFGVQFHPEKSQAAGLGLLDNFAALPTTEEAGRTVST</sequence>
<evidence type="ECO:0000255" key="1">
    <source>
        <dbReference type="HAMAP-Rule" id="MF_00278"/>
    </source>
</evidence>
<dbReference type="EC" id="4.3.2.10" evidence="1"/>
<dbReference type="EC" id="3.5.1.2" evidence="1"/>
<dbReference type="EMBL" id="CP000159">
    <property type="protein sequence ID" value="ABC46287.1"/>
    <property type="molecule type" value="Genomic_DNA"/>
</dbReference>
<dbReference type="RefSeq" id="WP_011404308.1">
    <property type="nucleotide sequence ID" value="NC_007677.1"/>
</dbReference>
<dbReference type="RefSeq" id="YP_445682.1">
    <property type="nucleotide sequence ID" value="NC_007677.1"/>
</dbReference>
<dbReference type="SMR" id="Q2S299"/>
<dbReference type="STRING" id="309807.SRU_1561"/>
<dbReference type="MEROPS" id="C26.965"/>
<dbReference type="EnsemblBacteria" id="ABC46287">
    <property type="protein sequence ID" value="ABC46287"/>
    <property type="gene ID" value="SRU_1561"/>
</dbReference>
<dbReference type="GeneID" id="83728474"/>
<dbReference type="KEGG" id="sru:SRU_1561"/>
<dbReference type="PATRIC" id="fig|309807.25.peg.1615"/>
<dbReference type="eggNOG" id="COG0118">
    <property type="taxonomic scope" value="Bacteria"/>
</dbReference>
<dbReference type="HOGENOM" id="CLU_071837_2_2_10"/>
<dbReference type="OrthoDB" id="9807137at2"/>
<dbReference type="UniPathway" id="UPA00031">
    <property type="reaction ID" value="UER00010"/>
</dbReference>
<dbReference type="Proteomes" id="UP000008674">
    <property type="component" value="Chromosome"/>
</dbReference>
<dbReference type="GO" id="GO:0005737">
    <property type="term" value="C:cytoplasm"/>
    <property type="evidence" value="ECO:0007669"/>
    <property type="project" value="UniProtKB-SubCell"/>
</dbReference>
<dbReference type="GO" id="GO:0004359">
    <property type="term" value="F:glutaminase activity"/>
    <property type="evidence" value="ECO:0007669"/>
    <property type="project" value="UniProtKB-EC"/>
</dbReference>
<dbReference type="GO" id="GO:0000107">
    <property type="term" value="F:imidazoleglycerol-phosphate synthase activity"/>
    <property type="evidence" value="ECO:0007669"/>
    <property type="project" value="UniProtKB-UniRule"/>
</dbReference>
<dbReference type="GO" id="GO:0016829">
    <property type="term" value="F:lyase activity"/>
    <property type="evidence" value="ECO:0007669"/>
    <property type="project" value="UniProtKB-KW"/>
</dbReference>
<dbReference type="GO" id="GO:0000105">
    <property type="term" value="P:L-histidine biosynthetic process"/>
    <property type="evidence" value="ECO:0007669"/>
    <property type="project" value="UniProtKB-UniRule"/>
</dbReference>
<dbReference type="CDD" id="cd01748">
    <property type="entry name" value="GATase1_IGP_Synthase"/>
    <property type="match status" value="1"/>
</dbReference>
<dbReference type="Gene3D" id="3.40.50.880">
    <property type="match status" value="1"/>
</dbReference>
<dbReference type="HAMAP" id="MF_00278">
    <property type="entry name" value="HisH"/>
    <property type="match status" value="1"/>
</dbReference>
<dbReference type="InterPro" id="IPR029062">
    <property type="entry name" value="Class_I_gatase-like"/>
</dbReference>
<dbReference type="InterPro" id="IPR017926">
    <property type="entry name" value="GATASE"/>
</dbReference>
<dbReference type="InterPro" id="IPR010139">
    <property type="entry name" value="Imidazole-glycPsynth_HisH"/>
</dbReference>
<dbReference type="NCBIfam" id="TIGR01855">
    <property type="entry name" value="IMP_synth_hisH"/>
    <property type="match status" value="1"/>
</dbReference>
<dbReference type="PANTHER" id="PTHR42701">
    <property type="entry name" value="IMIDAZOLE GLYCEROL PHOSPHATE SYNTHASE SUBUNIT HISH"/>
    <property type="match status" value="1"/>
</dbReference>
<dbReference type="PANTHER" id="PTHR42701:SF1">
    <property type="entry name" value="IMIDAZOLE GLYCEROL PHOSPHATE SYNTHASE SUBUNIT HISH"/>
    <property type="match status" value="1"/>
</dbReference>
<dbReference type="Pfam" id="PF00117">
    <property type="entry name" value="GATase"/>
    <property type="match status" value="1"/>
</dbReference>
<dbReference type="PIRSF" id="PIRSF000495">
    <property type="entry name" value="Amidotransf_hisH"/>
    <property type="match status" value="1"/>
</dbReference>
<dbReference type="SUPFAM" id="SSF52317">
    <property type="entry name" value="Class I glutamine amidotransferase-like"/>
    <property type="match status" value="1"/>
</dbReference>
<dbReference type="PROSITE" id="PS51273">
    <property type="entry name" value="GATASE_TYPE_1"/>
    <property type="match status" value="1"/>
</dbReference>
<gene>
    <name evidence="1" type="primary">hisH</name>
    <name type="ordered locus">SRU_1561</name>
</gene>
<feature type="chain" id="PRO_1000114789" description="Imidazole glycerol phosphate synthase subunit HisH">
    <location>
        <begin position="1"/>
        <end position="218"/>
    </location>
</feature>
<feature type="domain" description="Glutamine amidotransferase type-1" evidence="1">
    <location>
        <begin position="1"/>
        <end position="213"/>
    </location>
</feature>
<feature type="active site" description="Nucleophile" evidence="1">
    <location>
        <position position="79"/>
    </location>
</feature>
<feature type="active site" evidence="1">
    <location>
        <position position="188"/>
    </location>
</feature>
<feature type="active site" evidence="1">
    <location>
        <position position="190"/>
    </location>
</feature>